<feature type="chain" id="PRO_0000318220" description="Protein-export protein SecB">
    <location>
        <begin position="1"/>
        <end position="164"/>
    </location>
</feature>
<name>SECB_CHRSD</name>
<accession>Q1R1J5</accession>
<sequence length="164" mass="18100">MAEDNNQAAQGGNDAQNQLQFSMQRIYVKDISFESPNAPSVFQNAFKPKVGLDLNTTHKQVGENLYEVVVKVTAQVTNNEDGATAFLAEVEQAGLFRIAGLSDDQLDHTLGAFCPNMLFPYARECIDNLVNRGSFPPLMLSPVNFEGMYAQKKKRESEAAENAH</sequence>
<keyword id="KW-0143">Chaperone</keyword>
<keyword id="KW-0963">Cytoplasm</keyword>
<keyword id="KW-0653">Protein transport</keyword>
<keyword id="KW-1185">Reference proteome</keyword>
<keyword id="KW-0811">Translocation</keyword>
<keyword id="KW-0813">Transport</keyword>
<dbReference type="EMBL" id="CP000285">
    <property type="protein sequence ID" value="ABE57413.1"/>
    <property type="molecule type" value="Genomic_DNA"/>
</dbReference>
<dbReference type="RefSeq" id="WP_011505359.1">
    <property type="nucleotide sequence ID" value="NC_007963.1"/>
</dbReference>
<dbReference type="SMR" id="Q1R1J5"/>
<dbReference type="STRING" id="290398.Csal_0048"/>
<dbReference type="GeneID" id="95332800"/>
<dbReference type="KEGG" id="csa:Csal_0048"/>
<dbReference type="eggNOG" id="COG1952">
    <property type="taxonomic scope" value="Bacteria"/>
</dbReference>
<dbReference type="HOGENOM" id="CLU_111574_1_0_6"/>
<dbReference type="OrthoDB" id="9795145at2"/>
<dbReference type="Proteomes" id="UP000000239">
    <property type="component" value="Chromosome"/>
</dbReference>
<dbReference type="GO" id="GO:0005737">
    <property type="term" value="C:cytoplasm"/>
    <property type="evidence" value="ECO:0007669"/>
    <property type="project" value="UniProtKB-SubCell"/>
</dbReference>
<dbReference type="GO" id="GO:0051082">
    <property type="term" value="F:unfolded protein binding"/>
    <property type="evidence" value="ECO:0007669"/>
    <property type="project" value="InterPro"/>
</dbReference>
<dbReference type="GO" id="GO:0006457">
    <property type="term" value="P:protein folding"/>
    <property type="evidence" value="ECO:0007669"/>
    <property type="project" value="UniProtKB-UniRule"/>
</dbReference>
<dbReference type="GO" id="GO:0051262">
    <property type="term" value="P:protein tetramerization"/>
    <property type="evidence" value="ECO:0007669"/>
    <property type="project" value="InterPro"/>
</dbReference>
<dbReference type="GO" id="GO:0015031">
    <property type="term" value="P:protein transport"/>
    <property type="evidence" value="ECO:0007669"/>
    <property type="project" value="UniProtKB-UniRule"/>
</dbReference>
<dbReference type="Gene3D" id="3.10.420.10">
    <property type="entry name" value="SecB-like"/>
    <property type="match status" value="1"/>
</dbReference>
<dbReference type="HAMAP" id="MF_00821">
    <property type="entry name" value="SecB"/>
    <property type="match status" value="1"/>
</dbReference>
<dbReference type="InterPro" id="IPR003708">
    <property type="entry name" value="SecB"/>
</dbReference>
<dbReference type="InterPro" id="IPR035958">
    <property type="entry name" value="SecB-like_sf"/>
</dbReference>
<dbReference type="NCBIfam" id="NF004393">
    <property type="entry name" value="PRK05751.1-4"/>
    <property type="match status" value="1"/>
</dbReference>
<dbReference type="NCBIfam" id="TIGR00809">
    <property type="entry name" value="secB"/>
    <property type="match status" value="1"/>
</dbReference>
<dbReference type="PANTHER" id="PTHR36918">
    <property type="match status" value="1"/>
</dbReference>
<dbReference type="PANTHER" id="PTHR36918:SF1">
    <property type="entry name" value="PROTEIN-EXPORT PROTEIN SECB"/>
    <property type="match status" value="1"/>
</dbReference>
<dbReference type="Pfam" id="PF02556">
    <property type="entry name" value="SecB"/>
    <property type="match status" value="1"/>
</dbReference>
<dbReference type="PRINTS" id="PR01594">
    <property type="entry name" value="SECBCHAPRONE"/>
</dbReference>
<dbReference type="SUPFAM" id="SSF54611">
    <property type="entry name" value="SecB-like"/>
    <property type="match status" value="1"/>
</dbReference>
<gene>
    <name evidence="1" type="primary">secB</name>
    <name type="ordered locus">Csal_0048</name>
</gene>
<reference key="1">
    <citation type="journal article" date="2011" name="Stand. Genomic Sci.">
        <title>Complete genome sequence of the halophilic and highly halotolerant Chromohalobacter salexigens type strain (1H11(T)).</title>
        <authorList>
            <person name="Copeland A."/>
            <person name="O'Connor K."/>
            <person name="Lucas S."/>
            <person name="Lapidus A."/>
            <person name="Berry K.W."/>
            <person name="Detter J.C."/>
            <person name="Del Rio T.G."/>
            <person name="Hammon N."/>
            <person name="Dalin E."/>
            <person name="Tice H."/>
            <person name="Pitluck S."/>
            <person name="Bruce D."/>
            <person name="Goodwin L."/>
            <person name="Han C."/>
            <person name="Tapia R."/>
            <person name="Saunders E."/>
            <person name="Schmutz J."/>
            <person name="Brettin T."/>
            <person name="Larimer F."/>
            <person name="Land M."/>
            <person name="Hauser L."/>
            <person name="Vargas C."/>
            <person name="Nieto J.J."/>
            <person name="Kyrpides N.C."/>
            <person name="Ivanova N."/>
            <person name="Goker M."/>
            <person name="Klenk H.P."/>
            <person name="Csonka L.N."/>
            <person name="Woyke T."/>
        </authorList>
    </citation>
    <scope>NUCLEOTIDE SEQUENCE [LARGE SCALE GENOMIC DNA]</scope>
    <source>
        <strain>ATCC BAA-138 / DSM 3043 / CIP 106854 / NCIMB 13768 / 1H11</strain>
    </source>
</reference>
<organism>
    <name type="scientific">Chromohalobacter salexigens (strain ATCC BAA-138 / DSM 3043 / CIP 106854 / NCIMB 13768 / 1H11)</name>
    <dbReference type="NCBI Taxonomy" id="290398"/>
    <lineage>
        <taxon>Bacteria</taxon>
        <taxon>Pseudomonadati</taxon>
        <taxon>Pseudomonadota</taxon>
        <taxon>Gammaproteobacteria</taxon>
        <taxon>Oceanospirillales</taxon>
        <taxon>Halomonadaceae</taxon>
        <taxon>Chromohalobacter</taxon>
    </lineage>
</organism>
<evidence type="ECO:0000255" key="1">
    <source>
        <dbReference type="HAMAP-Rule" id="MF_00821"/>
    </source>
</evidence>
<comment type="function">
    <text evidence="1">One of the proteins required for the normal export of preproteins out of the cell cytoplasm. It is a molecular chaperone that binds to a subset of precursor proteins, maintaining them in a translocation-competent state. It also specifically binds to its receptor SecA.</text>
</comment>
<comment type="subunit">
    <text evidence="1">Homotetramer, a dimer of dimers. One homotetramer interacts with 1 SecA dimer.</text>
</comment>
<comment type="subcellular location">
    <subcellularLocation>
        <location evidence="1">Cytoplasm</location>
    </subcellularLocation>
</comment>
<comment type="similarity">
    <text evidence="1">Belongs to the SecB family.</text>
</comment>
<proteinExistence type="inferred from homology"/>
<protein>
    <recommendedName>
        <fullName evidence="1">Protein-export protein SecB</fullName>
    </recommendedName>
</protein>